<comment type="function">
    <text evidence="1">Binds directly to 16S ribosomal RNA.</text>
</comment>
<comment type="similarity">
    <text evidence="1">Belongs to the bacterial ribosomal protein bS20 family.</text>
</comment>
<name>RS20_BORBU</name>
<gene>
    <name evidence="1" type="primary">rpsT</name>
    <name type="ordered locus">BB_0233</name>
</gene>
<accession>P49394</accession>
<accession>O51249</accession>
<evidence type="ECO:0000255" key="1">
    <source>
        <dbReference type="HAMAP-Rule" id="MF_00500"/>
    </source>
</evidence>
<evidence type="ECO:0000305" key="2"/>
<protein>
    <recommendedName>
        <fullName evidence="1">Small ribosomal subunit protein bS20</fullName>
    </recommendedName>
    <alternativeName>
        <fullName evidence="2">30S ribosomal protein S20</fullName>
    </alternativeName>
</protein>
<reference key="1">
    <citation type="submission" date="1995-09" db="EMBL/GenBank/DDBJ databases">
        <authorList>
            <person name="Tilly K."/>
        </authorList>
    </citation>
    <scope>NUCLEOTIDE SEQUENCE [GENOMIC DNA]</scope>
</reference>
<reference key="2">
    <citation type="journal article" date="1997" name="Nature">
        <title>Genomic sequence of a Lyme disease spirochaete, Borrelia burgdorferi.</title>
        <authorList>
            <person name="Fraser C.M."/>
            <person name="Casjens S."/>
            <person name="Huang W.M."/>
            <person name="Sutton G.G."/>
            <person name="Clayton R.A."/>
            <person name="Lathigra R."/>
            <person name="White O."/>
            <person name="Ketchum K.A."/>
            <person name="Dodson R.J."/>
            <person name="Hickey E.K."/>
            <person name="Gwinn M.L."/>
            <person name="Dougherty B.A."/>
            <person name="Tomb J.-F."/>
            <person name="Fleischmann R.D."/>
            <person name="Richardson D.L."/>
            <person name="Peterson J.D."/>
            <person name="Kerlavage A.R."/>
            <person name="Quackenbush J."/>
            <person name="Salzberg S.L."/>
            <person name="Hanson M."/>
            <person name="van Vugt R."/>
            <person name="Palmer N."/>
            <person name="Adams M.D."/>
            <person name="Gocayne J.D."/>
            <person name="Weidman J.F."/>
            <person name="Utterback T.R."/>
            <person name="Watthey L."/>
            <person name="McDonald L.A."/>
            <person name="Artiach P."/>
            <person name="Bowman C."/>
            <person name="Garland S.A."/>
            <person name="Fujii C."/>
            <person name="Cotton M.D."/>
            <person name="Horst K."/>
            <person name="Roberts K.M."/>
            <person name="Hatch B."/>
            <person name="Smith H.O."/>
            <person name="Venter J.C."/>
        </authorList>
    </citation>
    <scope>NUCLEOTIDE SEQUENCE [LARGE SCALE GENOMIC DNA]</scope>
    <source>
        <strain>ATCC 35210 / DSM 4680 / CIP 102532 / B31</strain>
    </source>
</reference>
<feature type="chain" id="PRO_0000167927" description="Small ribosomal subunit protein bS20">
    <location>
        <begin position="1"/>
        <end position="85"/>
    </location>
</feature>
<keyword id="KW-0002">3D-structure</keyword>
<keyword id="KW-1185">Reference proteome</keyword>
<keyword id="KW-0687">Ribonucleoprotein</keyword>
<keyword id="KW-0689">Ribosomal protein</keyword>
<keyword id="KW-0694">RNA-binding</keyword>
<keyword id="KW-0699">rRNA-binding</keyword>
<organism>
    <name type="scientific">Borreliella burgdorferi (strain ATCC 35210 / DSM 4680 / CIP 102532 / B31)</name>
    <name type="common">Borrelia burgdorferi</name>
    <dbReference type="NCBI Taxonomy" id="224326"/>
    <lineage>
        <taxon>Bacteria</taxon>
        <taxon>Pseudomonadati</taxon>
        <taxon>Spirochaetota</taxon>
        <taxon>Spirochaetia</taxon>
        <taxon>Spirochaetales</taxon>
        <taxon>Borreliaceae</taxon>
        <taxon>Borreliella</taxon>
    </lineage>
</organism>
<proteinExistence type="evidence at protein level"/>
<dbReference type="EMBL" id="U35673">
    <property type="protein sequence ID" value="AAB41459.1"/>
    <property type="molecule type" value="Genomic_DNA"/>
</dbReference>
<dbReference type="EMBL" id="AE000783">
    <property type="protein sequence ID" value="AAC66616.2"/>
    <property type="molecule type" value="Genomic_DNA"/>
</dbReference>
<dbReference type="PIR" id="A70129">
    <property type="entry name" value="A70129"/>
</dbReference>
<dbReference type="RefSeq" id="NP_212367.2">
    <property type="nucleotide sequence ID" value="NC_001318.1"/>
</dbReference>
<dbReference type="RefSeq" id="WP_002556832.1">
    <property type="nucleotide sequence ID" value="NC_001318.1"/>
</dbReference>
<dbReference type="PDB" id="8FMW">
    <property type="method" value="EM"/>
    <property type="resolution" value="2.86 A"/>
    <property type="chains" value="T=1-85"/>
</dbReference>
<dbReference type="PDBsum" id="8FMW"/>
<dbReference type="EMDB" id="EMD-29298"/>
<dbReference type="SMR" id="P49394"/>
<dbReference type="STRING" id="224326.BB_0233"/>
<dbReference type="PaxDb" id="224326-BB_0233"/>
<dbReference type="EnsemblBacteria" id="AAC66616">
    <property type="protein sequence ID" value="AAC66616"/>
    <property type="gene ID" value="BB_0233"/>
</dbReference>
<dbReference type="GeneID" id="77265074"/>
<dbReference type="KEGG" id="bbu:BB_0233"/>
<dbReference type="PATRIC" id="fig|224326.49.peg.632"/>
<dbReference type="HOGENOM" id="CLU_160655_4_0_12"/>
<dbReference type="OrthoDB" id="9808392at2"/>
<dbReference type="Proteomes" id="UP000001807">
    <property type="component" value="Chromosome"/>
</dbReference>
<dbReference type="GO" id="GO:0005829">
    <property type="term" value="C:cytosol"/>
    <property type="evidence" value="ECO:0007669"/>
    <property type="project" value="TreeGrafter"/>
</dbReference>
<dbReference type="GO" id="GO:0015935">
    <property type="term" value="C:small ribosomal subunit"/>
    <property type="evidence" value="ECO:0007669"/>
    <property type="project" value="TreeGrafter"/>
</dbReference>
<dbReference type="GO" id="GO:0070181">
    <property type="term" value="F:small ribosomal subunit rRNA binding"/>
    <property type="evidence" value="ECO:0007669"/>
    <property type="project" value="TreeGrafter"/>
</dbReference>
<dbReference type="GO" id="GO:0003735">
    <property type="term" value="F:structural constituent of ribosome"/>
    <property type="evidence" value="ECO:0007669"/>
    <property type="project" value="InterPro"/>
</dbReference>
<dbReference type="GO" id="GO:0006412">
    <property type="term" value="P:translation"/>
    <property type="evidence" value="ECO:0007669"/>
    <property type="project" value="UniProtKB-UniRule"/>
</dbReference>
<dbReference type="Gene3D" id="1.20.58.110">
    <property type="entry name" value="Ribosomal protein S20"/>
    <property type="match status" value="1"/>
</dbReference>
<dbReference type="HAMAP" id="MF_00500">
    <property type="entry name" value="Ribosomal_bS20"/>
    <property type="match status" value="1"/>
</dbReference>
<dbReference type="InterPro" id="IPR002583">
    <property type="entry name" value="Ribosomal_bS20"/>
</dbReference>
<dbReference type="InterPro" id="IPR036510">
    <property type="entry name" value="Ribosomal_bS20_sf"/>
</dbReference>
<dbReference type="NCBIfam" id="TIGR00029">
    <property type="entry name" value="S20"/>
    <property type="match status" value="1"/>
</dbReference>
<dbReference type="PANTHER" id="PTHR33398">
    <property type="entry name" value="30S RIBOSOMAL PROTEIN S20"/>
    <property type="match status" value="1"/>
</dbReference>
<dbReference type="PANTHER" id="PTHR33398:SF1">
    <property type="entry name" value="SMALL RIBOSOMAL SUBUNIT PROTEIN BS20C"/>
    <property type="match status" value="1"/>
</dbReference>
<dbReference type="Pfam" id="PF01649">
    <property type="entry name" value="Ribosomal_S20p"/>
    <property type="match status" value="1"/>
</dbReference>
<dbReference type="SUPFAM" id="SSF46992">
    <property type="entry name" value="Ribosomal protein S20"/>
    <property type="match status" value="1"/>
</dbReference>
<sequence length="85" mass="9947">MRKNASALKRSRQNLKRKIRNVSVKSELKTIEKRCINMIKAGKKDEAIEFFKFVAKKLDTAARKRIIHKNKAARKKSRLNVLLLK</sequence>